<name>Y445_PBCV1</name>
<protein>
    <recommendedName>
        <fullName>Putative ABC transporter A445L</fullName>
    </recommendedName>
</protein>
<proteinExistence type="evidence at transcript level"/>
<organismHost>
    <name type="scientific">Chlorella</name>
    <dbReference type="NCBI Taxonomy" id="3071"/>
</organismHost>
<comment type="induction">
    <text evidence="1">Expressed in the early phase of the viral replicative cycle.</text>
</comment>
<comment type="similarity">
    <text evidence="2">Belongs to the protein kinase superfamily. ADCK protein kinase family.</text>
</comment>
<gene>
    <name type="ordered locus">A445L</name>
</gene>
<organism>
    <name type="scientific">Paramecium bursaria Chlorella virus 1</name>
    <name type="common">PBCV-1</name>
    <dbReference type="NCBI Taxonomy" id="10506"/>
    <lineage>
        <taxon>Viruses</taxon>
        <taxon>Varidnaviria</taxon>
        <taxon>Bamfordvirae</taxon>
        <taxon>Nucleocytoviricota</taxon>
        <taxon>Megaviricetes</taxon>
        <taxon>Algavirales</taxon>
        <taxon>Phycodnaviridae</taxon>
        <taxon>Chlorovirus</taxon>
    </lineage>
</organism>
<keyword id="KW-1185">Reference proteome</keyword>
<reference key="1">
    <citation type="journal article" date="1996" name="Virology">
        <title>Analysis of 76 kb of the chlorella virus PBCV-1 330-kb genome: map positions 182 to 258.</title>
        <authorList>
            <person name="Kutish G.F."/>
            <person name="Li Y."/>
            <person name="Lu Z."/>
            <person name="Furuta M."/>
            <person name="Rock D.L."/>
            <person name="van Etten J.L."/>
        </authorList>
    </citation>
    <scope>NUCLEOTIDE SEQUENCE [LARGE SCALE GENOMIC DNA]</scope>
</reference>
<reference key="2">
    <citation type="submission" date="2011-02" db="EMBL/GenBank/DDBJ databases">
        <authorList>
            <person name="Dunigan D.D."/>
            <person name="Blanc G."/>
            <person name="Duncan G.A."/>
            <person name="Gurnon J.R."/>
            <person name="Jeanniard A."/>
            <person name="McClung O.W."/>
            <person name="Upton C."/>
            <person name="van Etten J.L."/>
        </authorList>
    </citation>
    <scope>SEQUENCE REVISION TO ASP-282</scope>
</reference>
<reference key="3">
    <citation type="journal article" date="2010" name="J. Virol.">
        <title>Microarray analysis of Paramecium bursaria chlorella virus 1 transcription.</title>
        <authorList>
            <person name="Yanai-Balser G.M."/>
            <person name="Duncan G.A."/>
            <person name="Eudy J.D."/>
            <person name="Wang D."/>
            <person name="Li X."/>
            <person name="Agarkova I.V."/>
            <person name="Dunigan D.D."/>
            <person name="Van Etten J.L."/>
        </authorList>
    </citation>
    <scope>INDUCTION</scope>
</reference>
<accession>Q98496</accession>
<evidence type="ECO:0000269" key="1">
    <source>
    </source>
</evidence>
<evidence type="ECO:0000305" key="2"/>
<dbReference type="EMBL" id="JF411744">
    <property type="protein sequence ID" value="AAC96813.2"/>
    <property type="molecule type" value="Genomic_DNA"/>
</dbReference>
<dbReference type="PIR" id="T17948">
    <property type="entry name" value="T17948"/>
</dbReference>
<dbReference type="RefSeq" id="NP_048802.2">
    <property type="nucleotide sequence ID" value="NC_000852.5"/>
</dbReference>
<dbReference type="SMR" id="Q98496"/>
<dbReference type="GeneID" id="918093"/>
<dbReference type="KEGG" id="vg:918093"/>
<dbReference type="OrthoDB" id="2684at10239"/>
<dbReference type="Proteomes" id="UP000000862">
    <property type="component" value="Genome"/>
</dbReference>
<dbReference type="GO" id="GO:0016020">
    <property type="term" value="C:membrane"/>
    <property type="evidence" value="ECO:0007669"/>
    <property type="project" value="GOC"/>
</dbReference>
<dbReference type="GO" id="GO:0046467">
    <property type="term" value="P:membrane lipid biosynthetic process"/>
    <property type="evidence" value="ECO:0007669"/>
    <property type="project" value="TreeGrafter"/>
</dbReference>
<dbReference type="GO" id="GO:1901031">
    <property type="term" value="P:regulation of response to reactive oxygen species"/>
    <property type="evidence" value="ECO:0007669"/>
    <property type="project" value="TreeGrafter"/>
</dbReference>
<dbReference type="CDD" id="cd05121">
    <property type="entry name" value="ABC1_ADCK3-like"/>
    <property type="match status" value="1"/>
</dbReference>
<dbReference type="InterPro" id="IPR004147">
    <property type="entry name" value="ABC1_dom"/>
</dbReference>
<dbReference type="InterPro" id="IPR011009">
    <property type="entry name" value="Kinase-like_dom_sf"/>
</dbReference>
<dbReference type="InterPro" id="IPR050154">
    <property type="entry name" value="UbiB_kinase"/>
</dbReference>
<dbReference type="PANTHER" id="PTHR10566">
    <property type="entry name" value="CHAPERONE-ACTIVITY OF BC1 COMPLEX CABC1 -RELATED"/>
    <property type="match status" value="1"/>
</dbReference>
<dbReference type="PANTHER" id="PTHR10566:SF115">
    <property type="entry name" value="PROTEIN ACTIVITY OF BC1 COMPLEX KINASE 8, CHLOROPLASTIC"/>
    <property type="match status" value="1"/>
</dbReference>
<dbReference type="Pfam" id="PF03109">
    <property type="entry name" value="ABC1"/>
    <property type="match status" value="1"/>
</dbReference>
<dbReference type="SUPFAM" id="SSF56112">
    <property type="entry name" value="Protein kinase-like (PK-like)"/>
    <property type="match status" value="1"/>
</dbReference>
<sequence>MNKQLTNNGFRLTQRGLQIGKYMYRTYQNVKRIQKGGPDSFKAAEDFVKDTSEIGVIAVKMSQFLSARSDIVDERTLKVIERLQSEVPPEKESPPDFTFYEWYKEPIASASIATVYKGKRKTDNSDVILKRVRPEVKQRIMEDLPLFIIVLDIAKFFGVPGAENMLEIVRECQPVLLGELNLKLEAKAMSLFKKKFASIPWLTIPTVYEAGETYMISEYVPSKKITAAYPNEMLARRLFELYIYMTIDIGLVHADPHAGNIGIKKDGTFVLYDFGAIIDVRDAKQYIAKCLKSVVIGDTDGVVRSLEDMGVIKSGGSVARLKKAIPKIKKIMESEDFNVELSKLPEFTSNENRIFELTTRYIYLIRSLTIVEGIISYHDRDFSLTKYIKKYNDIIDDIVEVPAIDIVKEIAGDFLTTPASLKNMNDLVFSMKDEISTEIADAKKIARYGFAMFLLIEIIKML</sequence>
<feature type="chain" id="PRO_0000200739" description="Putative ABC transporter A445L">
    <location>
        <begin position="1"/>
        <end position="462"/>
    </location>
</feature>